<name>SYN_ONYPE</name>
<accession>Q6YPH3</accession>
<gene>
    <name evidence="1" type="primary">asnS</name>
    <name type="ordered locus">PAM_754</name>
</gene>
<keyword id="KW-0030">Aminoacyl-tRNA synthetase</keyword>
<keyword id="KW-0067">ATP-binding</keyword>
<keyword id="KW-0963">Cytoplasm</keyword>
<keyword id="KW-0436">Ligase</keyword>
<keyword id="KW-0547">Nucleotide-binding</keyword>
<keyword id="KW-0648">Protein biosynthesis</keyword>
<sequence>MKISIKDIFQKPELFYQKKIVLNGWVRNCRYQKKLIFIDLNDGTFLENLQIICKETKTKNIETAAEITEFHENQKVNTKNESPNNINLEKLKEMLQIGASLQVEGILKATNNPQTPFEISAQNVSLLGASDFSYPLQPKKHSKAFLRQISHLRVRTKLFGAVFRIRNTAFFALHSFFQKKGFFHINTPIITANDGEGAGELFQLTTLNLEALPQTKNIPNASKLADETISKNEIDYQKDFFGKKVFLTATGQLEAEAMALGLNKVYTFGPTFRAEKSNTPRHAAEFWMLEPEMAFCNLSQNLKVAQEMLQFVIAKCLEQNYQDIEFLDKTEKNCLIEELKNISEEKEFLTVKYEQALEILQKSNTKFENPLFYGADLATEHEKYLTETHFKKPVFIVDWPKEIKAFYMKNNPDQKTVAAMDLLVPRVGELIGGSQREENLSVLIEKMNQMKIPQKDLEWYLDLRRFGGCIHSGFGLGFERLLIFLTGLDNIRDVIAFPRTYHNLVF</sequence>
<protein>
    <recommendedName>
        <fullName evidence="1">Asparagine--tRNA ligase</fullName>
        <ecNumber evidence="1">6.1.1.22</ecNumber>
    </recommendedName>
    <alternativeName>
        <fullName evidence="1">Asparaginyl-tRNA synthetase</fullName>
        <shortName evidence="1">AsnRS</shortName>
    </alternativeName>
</protein>
<feature type="chain" id="PRO_0000176436" description="Asparagine--tRNA ligase">
    <location>
        <begin position="1"/>
        <end position="506"/>
    </location>
</feature>
<dbReference type="EC" id="6.1.1.22" evidence="1"/>
<dbReference type="EMBL" id="AP006628">
    <property type="protein sequence ID" value="BAD04839.1"/>
    <property type="molecule type" value="Genomic_DNA"/>
</dbReference>
<dbReference type="SMR" id="Q6YPH3"/>
<dbReference type="STRING" id="262768.PAM_754"/>
<dbReference type="KEGG" id="poy:PAM_754"/>
<dbReference type="eggNOG" id="COG0017">
    <property type="taxonomic scope" value="Bacteria"/>
</dbReference>
<dbReference type="HOGENOM" id="CLU_004553_2_0_14"/>
<dbReference type="BioCyc" id="OYEL262768:G1G26-908-MONOMER"/>
<dbReference type="Proteomes" id="UP000002523">
    <property type="component" value="Chromosome"/>
</dbReference>
<dbReference type="GO" id="GO:0005737">
    <property type="term" value="C:cytoplasm"/>
    <property type="evidence" value="ECO:0007669"/>
    <property type="project" value="UniProtKB-SubCell"/>
</dbReference>
<dbReference type="GO" id="GO:0004816">
    <property type="term" value="F:asparagine-tRNA ligase activity"/>
    <property type="evidence" value="ECO:0007669"/>
    <property type="project" value="UniProtKB-UniRule"/>
</dbReference>
<dbReference type="GO" id="GO:0005524">
    <property type="term" value="F:ATP binding"/>
    <property type="evidence" value="ECO:0007669"/>
    <property type="project" value="UniProtKB-UniRule"/>
</dbReference>
<dbReference type="GO" id="GO:0003676">
    <property type="term" value="F:nucleic acid binding"/>
    <property type="evidence" value="ECO:0007669"/>
    <property type="project" value="InterPro"/>
</dbReference>
<dbReference type="GO" id="GO:0006421">
    <property type="term" value="P:asparaginyl-tRNA aminoacylation"/>
    <property type="evidence" value="ECO:0007669"/>
    <property type="project" value="UniProtKB-UniRule"/>
</dbReference>
<dbReference type="CDD" id="cd00776">
    <property type="entry name" value="AsxRS_core"/>
    <property type="match status" value="1"/>
</dbReference>
<dbReference type="CDD" id="cd04318">
    <property type="entry name" value="EcAsnRS_like_N"/>
    <property type="match status" value="1"/>
</dbReference>
<dbReference type="FunFam" id="3.30.930.10:FF:000016">
    <property type="entry name" value="Asparagine--tRNA ligase"/>
    <property type="match status" value="1"/>
</dbReference>
<dbReference type="Gene3D" id="3.30.930.10">
    <property type="entry name" value="Bira Bifunctional Protein, Domain 2"/>
    <property type="match status" value="1"/>
</dbReference>
<dbReference type="Gene3D" id="2.40.50.140">
    <property type="entry name" value="Nucleic acid-binding proteins"/>
    <property type="match status" value="1"/>
</dbReference>
<dbReference type="HAMAP" id="MF_00534">
    <property type="entry name" value="Asn_tRNA_synth"/>
    <property type="match status" value="1"/>
</dbReference>
<dbReference type="InterPro" id="IPR004364">
    <property type="entry name" value="Aa-tRNA-synt_II"/>
</dbReference>
<dbReference type="InterPro" id="IPR006195">
    <property type="entry name" value="aa-tRNA-synth_II"/>
</dbReference>
<dbReference type="InterPro" id="IPR045864">
    <property type="entry name" value="aa-tRNA-synth_II/BPL/LPL"/>
</dbReference>
<dbReference type="InterPro" id="IPR004522">
    <property type="entry name" value="Asn-tRNA-ligase"/>
</dbReference>
<dbReference type="InterPro" id="IPR002312">
    <property type="entry name" value="Asp/Asn-tRNA-synth_IIb"/>
</dbReference>
<dbReference type="InterPro" id="IPR012340">
    <property type="entry name" value="NA-bd_OB-fold"/>
</dbReference>
<dbReference type="InterPro" id="IPR004365">
    <property type="entry name" value="NA-bd_OB_tRNA"/>
</dbReference>
<dbReference type="NCBIfam" id="TIGR00457">
    <property type="entry name" value="asnS"/>
    <property type="match status" value="1"/>
</dbReference>
<dbReference type="NCBIfam" id="NF003037">
    <property type="entry name" value="PRK03932.1"/>
    <property type="match status" value="1"/>
</dbReference>
<dbReference type="PANTHER" id="PTHR22594:SF34">
    <property type="entry name" value="ASPARAGINE--TRNA LIGASE, MITOCHONDRIAL-RELATED"/>
    <property type="match status" value="1"/>
</dbReference>
<dbReference type="PANTHER" id="PTHR22594">
    <property type="entry name" value="ASPARTYL/LYSYL-TRNA SYNTHETASE"/>
    <property type="match status" value="1"/>
</dbReference>
<dbReference type="Pfam" id="PF00152">
    <property type="entry name" value="tRNA-synt_2"/>
    <property type="match status" value="1"/>
</dbReference>
<dbReference type="Pfam" id="PF01336">
    <property type="entry name" value="tRNA_anti-codon"/>
    <property type="match status" value="1"/>
</dbReference>
<dbReference type="PRINTS" id="PR01042">
    <property type="entry name" value="TRNASYNTHASP"/>
</dbReference>
<dbReference type="SUPFAM" id="SSF55681">
    <property type="entry name" value="Class II aaRS and biotin synthetases"/>
    <property type="match status" value="1"/>
</dbReference>
<dbReference type="SUPFAM" id="SSF50249">
    <property type="entry name" value="Nucleic acid-binding proteins"/>
    <property type="match status" value="1"/>
</dbReference>
<dbReference type="PROSITE" id="PS50862">
    <property type="entry name" value="AA_TRNA_LIGASE_II"/>
    <property type="match status" value="1"/>
</dbReference>
<proteinExistence type="inferred from homology"/>
<reference key="1">
    <citation type="journal article" date="2004" name="Nat. Genet.">
        <title>Reductive evolution suggested from the complete genome sequence of a plant-pathogenic phytoplasma.</title>
        <authorList>
            <person name="Oshima K."/>
            <person name="Kakizawa S."/>
            <person name="Nishigawa H."/>
            <person name="Jung H.-Y."/>
            <person name="Wei W."/>
            <person name="Suzuki S."/>
            <person name="Arashida R."/>
            <person name="Nakata D."/>
            <person name="Miyata S."/>
            <person name="Ugaki M."/>
            <person name="Namba S."/>
        </authorList>
    </citation>
    <scope>NUCLEOTIDE SEQUENCE [LARGE SCALE GENOMIC DNA]</scope>
    <source>
        <strain>OY-M</strain>
    </source>
</reference>
<evidence type="ECO:0000255" key="1">
    <source>
        <dbReference type="HAMAP-Rule" id="MF_00534"/>
    </source>
</evidence>
<comment type="catalytic activity">
    <reaction evidence="1">
        <text>tRNA(Asn) + L-asparagine + ATP = L-asparaginyl-tRNA(Asn) + AMP + diphosphate + H(+)</text>
        <dbReference type="Rhea" id="RHEA:11180"/>
        <dbReference type="Rhea" id="RHEA-COMP:9659"/>
        <dbReference type="Rhea" id="RHEA-COMP:9674"/>
        <dbReference type="ChEBI" id="CHEBI:15378"/>
        <dbReference type="ChEBI" id="CHEBI:30616"/>
        <dbReference type="ChEBI" id="CHEBI:33019"/>
        <dbReference type="ChEBI" id="CHEBI:58048"/>
        <dbReference type="ChEBI" id="CHEBI:78442"/>
        <dbReference type="ChEBI" id="CHEBI:78515"/>
        <dbReference type="ChEBI" id="CHEBI:456215"/>
        <dbReference type="EC" id="6.1.1.22"/>
    </reaction>
</comment>
<comment type="subunit">
    <text evidence="1">Homodimer.</text>
</comment>
<comment type="subcellular location">
    <subcellularLocation>
        <location evidence="1">Cytoplasm</location>
    </subcellularLocation>
</comment>
<comment type="similarity">
    <text evidence="1">Belongs to the class-II aminoacyl-tRNA synthetase family.</text>
</comment>
<organism>
    <name type="scientific">Onion yellows phytoplasma (strain OY-M)</name>
    <dbReference type="NCBI Taxonomy" id="262768"/>
    <lineage>
        <taxon>Bacteria</taxon>
        <taxon>Bacillati</taxon>
        <taxon>Mycoplasmatota</taxon>
        <taxon>Mollicutes</taxon>
        <taxon>Acholeplasmatales</taxon>
        <taxon>Acholeplasmataceae</taxon>
        <taxon>Candidatus Phytoplasma</taxon>
        <taxon>16SrI (Aster yellows group)</taxon>
    </lineage>
</organism>